<reference key="1">
    <citation type="submission" date="2007-09" db="EMBL/GenBank/DDBJ databases">
        <title>Complete sequence of chromosome of Serratia proteamaculans 568.</title>
        <authorList>
            <consortium name="US DOE Joint Genome Institute"/>
            <person name="Copeland A."/>
            <person name="Lucas S."/>
            <person name="Lapidus A."/>
            <person name="Barry K."/>
            <person name="Glavina del Rio T."/>
            <person name="Dalin E."/>
            <person name="Tice H."/>
            <person name="Pitluck S."/>
            <person name="Chain P."/>
            <person name="Malfatti S."/>
            <person name="Shin M."/>
            <person name="Vergez L."/>
            <person name="Schmutz J."/>
            <person name="Larimer F."/>
            <person name="Land M."/>
            <person name="Hauser L."/>
            <person name="Kyrpides N."/>
            <person name="Kim E."/>
            <person name="Taghavi S."/>
            <person name="Newman L."/>
            <person name="Vangronsveld J."/>
            <person name="van der Lelie D."/>
            <person name="Richardson P."/>
        </authorList>
    </citation>
    <scope>NUCLEOTIDE SEQUENCE [LARGE SCALE GENOMIC DNA]</scope>
    <source>
        <strain>568</strain>
    </source>
</reference>
<keyword id="KW-0031">Aminopeptidase</keyword>
<keyword id="KW-0963">Cytoplasm</keyword>
<keyword id="KW-0378">Hydrolase</keyword>
<keyword id="KW-0479">Metal-binding</keyword>
<keyword id="KW-0482">Metalloprotease</keyword>
<keyword id="KW-0645">Protease</keyword>
<keyword id="KW-0862">Zinc</keyword>
<dbReference type="EC" id="3.4.11.-" evidence="1"/>
<dbReference type="EMBL" id="CP000826">
    <property type="protein sequence ID" value="ABV42210.1"/>
    <property type="molecule type" value="Genomic_DNA"/>
</dbReference>
<dbReference type="SMR" id="A8GGH0"/>
<dbReference type="STRING" id="399741.Spro_3110"/>
<dbReference type="MEROPS" id="M90.001"/>
<dbReference type="KEGG" id="spe:Spro_3110"/>
<dbReference type="eggNOG" id="COG3228">
    <property type="taxonomic scope" value="Bacteria"/>
</dbReference>
<dbReference type="HOGENOM" id="CLU_063037_2_0_6"/>
<dbReference type="OrthoDB" id="9786424at2"/>
<dbReference type="GO" id="GO:0005829">
    <property type="term" value="C:cytosol"/>
    <property type="evidence" value="ECO:0007669"/>
    <property type="project" value="TreeGrafter"/>
</dbReference>
<dbReference type="GO" id="GO:0004177">
    <property type="term" value="F:aminopeptidase activity"/>
    <property type="evidence" value="ECO:0007669"/>
    <property type="project" value="UniProtKB-UniRule"/>
</dbReference>
<dbReference type="GO" id="GO:0008237">
    <property type="term" value="F:metallopeptidase activity"/>
    <property type="evidence" value="ECO:0007669"/>
    <property type="project" value="UniProtKB-UniRule"/>
</dbReference>
<dbReference type="GO" id="GO:0008270">
    <property type="term" value="F:zinc ion binding"/>
    <property type="evidence" value="ECO:0007669"/>
    <property type="project" value="UniProtKB-UniRule"/>
</dbReference>
<dbReference type="GO" id="GO:0006508">
    <property type="term" value="P:proteolysis"/>
    <property type="evidence" value="ECO:0007669"/>
    <property type="project" value="UniProtKB-KW"/>
</dbReference>
<dbReference type="CDD" id="cd20169">
    <property type="entry name" value="Peptidase_M90_mtfA"/>
    <property type="match status" value="1"/>
</dbReference>
<dbReference type="FunFam" id="1.10.472.150:FF:000001">
    <property type="entry name" value="Protein MtfA"/>
    <property type="match status" value="1"/>
</dbReference>
<dbReference type="FunFam" id="3.40.390.10:FF:000012">
    <property type="entry name" value="Protein MtfA"/>
    <property type="match status" value="1"/>
</dbReference>
<dbReference type="Gene3D" id="3.40.390.10">
    <property type="entry name" value="Collagenase (Catalytic Domain)"/>
    <property type="match status" value="1"/>
</dbReference>
<dbReference type="Gene3D" id="1.10.472.150">
    <property type="entry name" value="Glucose-regulated metallo-peptidase M90, N-terminal domain"/>
    <property type="match status" value="1"/>
</dbReference>
<dbReference type="HAMAP" id="MF_01593">
    <property type="entry name" value="MtfA"/>
    <property type="match status" value="1"/>
</dbReference>
<dbReference type="InterPro" id="IPR024079">
    <property type="entry name" value="MetalloPept_cat_dom_sf"/>
</dbReference>
<dbReference type="InterPro" id="IPR057256">
    <property type="entry name" value="MtfA_enterob"/>
</dbReference>
<dbReference type="InterPro" id="IPR010384">
    <property type="entry name" value="MtfA_fam"/>
</dbReference>
<dbReference type="InterPro" id="IPR042252">
    <property type="entry name" value="MtfA_N"/>
</dbReference>
<dbReference type="NCBIfam" id="NF011939">
    <property type="entry name" value="PRK15410.1"/>
    <property type="match status" value="1"/>
</dbReference>
<dbReference type="PANTHER" id="PTHR30164">
    <property type="entry name" value="MTFA PEPTIDASE"/>
    <property type="match status" value="1"/>
</dbReference>
<dbReference type="PANTHER" id="PTHR30164:SF2">
    <property type="entry name" value="PROTEIN MTFA"/>
    <property type="match status" value="1"/>
</dbReference>
<dbReference type="Pfam" id="PF06167">
    <property type="entry name" value="Peptidase_M90"/>
    <property type="match status" value="1"/>
</dbReference>
<dbReference type="SUPFAM" id="SSF55486">
    <property type="entry name" value="Metalloproteases ('zincins'), catalytic domain"/>
    <property type="match status" value="1"/>
</dbReference>
<comment type="function">
    <text evidence="1">Involved in the modulation of the activity of the glucose-phosphotransferase system (glucose-PTS). Interacts with the transcriptional repressor Mlc, preventing its interaction with DNA and leading to the modulation of expression of genes regulated by Mlc, including ptsG, which encodes the PTS system glucose-specific EIICB component.</text>
</comment>
<comment type="function">
    <text evidence="1">Shows zinc-dependent metallopeptidase activity.</text>
</comment>
<comment type="cofactor">
    <cofactor evidence="1">
        <name>Zn(2+)</name>
        <dbReference type="ChEBI" id="CHEBI:29105"/>
    </cofactor>
    <text evidence="1">Binds 1 zinc ion per subunit.</text>
</comment>
<comment type="subunit">
    <text evidence="1">Interacts with Mlc.</text>
</comment>
<comment type="subcellular location">
    <subcellularLocation>
        <location evidence="1">Cytoplasm</location>
    </subcellularLocation>
</comment>
<comment type="similarity">
    <text evidence="1">Belongs to the MtfA family.</text>
</comment>
<gene>
    <name evidence="1" type="primary">mtfA</name>
    <name type="ordered locus">Spro_3110</name>
</gene>
<accession>A8GGH0</accession>
<protein>
    <recommendedName>
        <fullName evidence="1">Mlc titration factor A</fullName>
    </recommendedName>
    <alternativeName>
        <fullName evidence="1">Probable zinc metallopeptidase MtfA</fullName>
        <ecNumber evidence="1">3.4.11.-</ecNumber>
    </alternativeName>
</protein>
<sequence length="262" mass="29416">MIKWPWKTHQPQAETLAQWQDALAIPLLSPLDEREQQRLIVVAGQILQQKSIVPLQGLVLTSQMQARIALLFALPVLELGAECLDGFNEILLYPSPFVVEDEWQDDFGLVHSGPVVQSGQSWEQGPIVLNWQDVQDSFDLSGFNLVIHEAVHKLDMRNGGSATGIPPIPLRDIAAWEHDLHAAMENLQDEIDMVGEEAASMDAYAATDPAECFAVLSEYFFSAPELLANRFPVMYQHFSRFYKQDPLARLQRLQAENSAEVP</sequence>
<evidence type="ECO:0000255" key="1">
    <source>
        <dbReference type="HAMAP-Rule" id="MF_01593"/>
    </source>
</evidence>
<feature type="chain" id="PRO_1000185710" description="Mlc titration factor A">
    <location>
        <begin position="1"/>
        <end position="262"/>
    </location>
</feature>
<feature type="binding site" evidence="1">
    <location>
        <position position="111"/>
    </location>
    <ligand>
        <name>Zn(2+)</name>
        <dbReference type="ChEBI" id="CHEBI:29105"/>
    </ligand>
</feature>
<feature type="binding site" evidence="1">
    <location>
        <position position="148"/>
    </location>
    <ligand>
        <name>Zn(2+)</name>
        <dbReference type="ChEBI" id="CHEBI:29105"/>
    </ligand>
</feature>
<feature type="binding site" evidence="1">
    <location>
        <position position="152"/>
    </location>
    <ligand>
        <name>Zn(2+)</name>
        <dbReference type="ChEBI" id="CHEBI:29105"/>
    </ligand>
</feature>
<feature type="binding site" evidence="1">
    <location>
        <position position="211"/>
    </location>
    <ligand>
        <name>Zn(2+)</name>
        <dbReference type="ChEBI" id="CHEBI:29105"/>
    </ligand>
</feature>
<proteinExistence type="inferred from homology"/>
<organism>
    <name type="scientific">Serratia proteamaculans (strain 568)</name>
    <dbReference type="NCBI Taxonomy" id="399741"/>
    <lineage>
        <taxon>Bacteria</taxon>
        <taxon>Pseudomonadati</taxon>
        <taxon>Pseudomonadota</taxon>
        <taxon>Gammaproteobacteria</taxon>
        <taxon>Enterobacterales</taxon>
        <taxon>Yersiniaceae</taxon>
        <taxon>Serratia</taxon>
    </lineage>
</organism>
<name>MTFA_SERP5</name>